<accession>P84416</accession>
<organism>
    <name type="scientific">Deropeltis sp. (strain Kenya)</name>
    <dbReference type="NCBI Taxonomy" id="303920"/>
    <lineage>
        <taxon>Eukaryota</taxon>
        <taxon>Metazoa</taxon>
        <taxon>Ecdysozoa</taxon>
        <taxon>Arthropoda</taxon>
        <taxon>Hexapoda</taxon>
        <taxon>Insecta</taxon>
        <taxon>Pterygota</taxon>
        <taxon>Neoptera</taxon>
        <taxon>Polyneoptera</taxon>
        <taxon>Dictyoptera</taxon>
        <taxon>Blattodea</taxon>
        <taxon>Blattoidea</taxon>
        <taxon>Blattidae</taxon>
        <taxon>Blattinae</taxon>
        <taxon>Deropeltis</taxon>
    </lineage>
</organism>
<comment type="function">
    <text evidence="1">Mediates visceral muscle contractile activity (myotropic activity).</text>
</comment>
<comment type="subcellular location">
    <subcellularLocation>
        <location evidence="4">Secreted</location>
    </subcellularLocation>
</comment>
<comment type="mass spectrometry"/>
<comment type="similarity">
    <text evidence="2">Belongs to the pyrokinin family.</text>
</comment>
<protein>
    <recommendedName>
        <fullName>Pyrokinin-4</fullName>
    </recommendedName>
    <alternativeName>
        <fullName>YXPRL-amide</fullName>
    </alternativeName>
</protein>
<dbReference type="GO" id="GO:0005576">
    <property type="term" value="C:extracellular region"/>
    <property type="evidence" value="ECO:0007669"/>
    <property type="project" value="UniProtKB-SubCell"/>
</dbReference>
<dbReference type="GO" id="GO:0007218">
    <property type="term" value="P:neuropeptide signaling pathway"/>
    <property type="evidence" value="ECO:0007669"/>
    <property type="project" value="UniProtKB-KW"/>
</dbReference>
<evidence type="ECO:0000250" key="1">
    <source>
        <dbReference type="UniProtKB" id="P82619"/>
    </source>
</evidence>
<evidence type="ECO:0000255" key="2"/>
<evidence type="ECO:0000269" key="3">
    <source>
    </source>
</evidence>
<evidence type="ECO:0000305" key="4"/>
<reference evidence="4" key="1">
    <citation type="journal article" date="2005" name="Peptides">
        <title>Peptidomics of neurohemal organs from species of the cockroach family Blattidae: how do neuropeptides of closely related species differ?</title>
        <authorList>
            <person name="Predel R."/>
            <person name="Gaede G."/>
        </authorList>
    </citation>
    <scope>PROTEIN SEQUENCE</scope>
    <scope>MASS SPECTROMETRY</scope>
    <scope>AMIDATION AT LEU-12</scope>
    <source>
        <tissue evidence="3">Corpora allata</tissue>
    </source>
</reference>
<sequence>DHLPHDVYSPRL</sequence>
<feature type="peptide" id="PRO_0000044329" description="Pyrokinin-4">
    <location>
        <begin position="1"/>
        <end position="12"/>
    </location>
</feature>
<feature type="modified residue" description="Leucine amide" evidence="3">
    <location>
        <position position="12"/>
    </location>
</feature>
<proteinExistence type="evidence at protein level"/>
<name>PPK4_DERKE</name>
<keyword id="KW-0027">Amidation</keyword>
<keyword id="KW-0903">Direct protein sequencing</keyword>
<keyword id="KW-0527">Neuropeptide</keyword>
<keyword id="KW-0964">Secreted</keyword>